<sequence length="747" mass="80414">MAPDSGPFPDGQFLKLLPVDPRDRGTQRCRLGPAAFRSLGVRLGSPMRISLPAGGCCLCTAWPRRDGADGFVQLDLQCASPGAAAAAGRISMDRLQPVSCPPLRRLEVWPVLRPQAGAPSSDAVLEVSQELLRNRPVSRGHVVATPPGIPGPVAALHVVSGTPDPEPAGRVTPHTRITLSDKPPPQVEPPGEVTLGGLSETADSLRELLRLPLCYPLALAALGLAVPRGVLLAGPPGVGKTQLVRAVAREAGAELLAVSAPALQGTRPGETEENVRRVFQRAQELASRGPSLLFLDEVDALCPRRGGPQRAPESRVVAQVLTLLDGIHGDREVVVVGATNRPDELDPALRRPGRFDREVIIGTPTLKQREAILGVITSKMPISSHIDLGLLAEMTVGYVGADLTALCREAATCALLKNEKNQNNPKIEETDFLEAFKKVQPSSFRSSIGLTDIRPVGWEQIGGLEDVKLKLKQCVEWPLKFPQEFARMGLTQPKGLLLYGPPGCAKTTLVRALATSCHCSFVSVCGADLFSPFVGDSEKVLSQVFRQARANTPALVFLDEIDSVLGSRSVGSSGCDARERVLSVLLNELDGVGVRTVERRGSKASQQECQEILSRSVMIVVATNRPDVLDDALLRPGRLDKMVYVPPPDREGRLSILKVCTNNMPIGLNVSLENLAAETCYFSGADLRNLCKEAALFALQENGLEATTVEQEHFTEALKTVKPSLTLKDLTFYENLFKKELSNLEDH</sequence>
<protein>
    <recommendedName>
        <fullName>ATPase family gene 2 protein homolog B</fullName>
        <ecNumber evidence="1">3.6.4.10</ecNumber>
    </recommendedName>
    <alternativeName>
        <fullName>AFG2 AAA ATPase homolog B</fullName>
    </alternativeName>
    <alternativeName>
        <fullName evidence="6">Ribosome biogenesis protein SPATA5L1</fullName>
    </alternativeName>
    <alternativeName>
        <fullName>Spermatogenesis-associated protein 5-like protein 1</fullName>
    </alternativeName>
</protein>
<keyword id="KW-0007">Acetylation</keyword>
<keyword id="KW-0067">ATP-binding</keyword>
<keyword id="KW-0963">Cytoplasm</keyword>
<keyword id="KW-0206">Cytoskeleton</keyword>
<keyword id="KW-0378">Hydrolase</keyword>
<keyword id="KW-0547">Nucleotide-binding</keyword>
<keyword id="KW-0539">Nucleus</keyword>
<keyword id="KW-1185">Reference proteome</keyword>
<keyword id="KW-0677">Repeat</keyword>
<keyword id="KW-0690">Ribosome biogenesis</keyword>
<dbReference type="EC" id="3.6.4.10" evidence="1"/>
<dbReference type="EMBL" id="CH473949">
    <property type="protein sequence ID" value="EDL80042.1"/>
    <property type="molecule type" value="Genomic_DNA"/>
</dbReference>
<dbReference type="RefSeq" id="NP_001103117.1">
    <property type="nucleotide sequence ID" value="NM_001109647.1"/>
</dbReference>
<dbReference type="SMR" id="D4A2B7"/>
<dbReference type="FunCoup" id="D4A2B7">
    <property type="interactions" value="910"/>
</dbReference>
<dbReference type="STRING" id="10116.ENSRNOP00000040861"/>
<dbReference type="PhosphoSitePlus" id="D4A2B7"/>
<dbReference type="PaxDb" id="10116-ENSRNOP00000040861"/>
<dbReference type="Ensembl" id="ENSRNOT00000043414.4">
    <property type="protein sequence ID" value="ENSRNOP00000040861.3"/>
    <property type="gene ID" value="ENSRNOG00000000169.6"/>
</dbReference>
<dbReference type="GeneID" id="691729"/>
<dbReference type="KEGG" id="rno:691729"/>
<dbReference type="UCSC" id="RGD:1595990">
    <property type="organism name" value="rat"/>
</dbReference>
<dbReference type="AGR" id="RGD:1595990"/>
<dbReference type="CTD" id="79029"/>
<dbReference type="RGD" id="1595990">
    <property type="gene designation" value="Afg2b"/>
</dbReference>
<dbReference type="eggNOG" id="KOG0730">
    <property type="taxonomic scope" value="Eukaryota"/>
</dbReference>
<dbReference type="GeneTree" id="ENSGT00940000160700"/>
<dbReference type="HOGENOM" id="CLU_000688_12_2_1"/>
<dbReference type="InParanoid" id="D4A2B7"/>
<dbReference type="OMA" id="DRHIYVA"/>
<dbReference type="OrthoDB" id="85553at9989"/>
<dbReference type="TreeFam" id="TF325792"/>
<dbReference type="PRO" id="PR:D4A2B7"/>
<dbReference type="Proteomes" id="UP000002494">
    <property type="component" value="Chromosome 3"/>
</dbReference>
<dbReference type="Proteomes" id="UP000234681">
    <property type="component" value="Chromosome 3"/>
</dbReference>
<dbReference type="Bgee" id="ENSRNOG00000000169">
    <property type="expression patterns" value="Expressed in thymus and 19 other cell types or tissues"/>
</dbReference>
<dbReference type="GO" id="GO:0005737">
    <property type="term" value="C:cytoplasm"/>
    <property type="evidence" value="ECO:0000266"/>
    <property type="project" value="RGD"/>
</dbReference>
<dbReference type="GO" id="GO:0005829">
    <property type="term" value="C:cytosol"/>
    <property type="evidence" value="ECO:0000318"/>
    <property type="project" value="GO_Central"/>
</dbReference>
<dbReference type="GO" id="GO:0005634">
    <property type="term" value="C:nucleus"/>
    <property type="evidence" value="ECO:0000318"/>
    <property type="project" value="GO_Central"/>
</dbReference>
<dbReference type="GO" id="GO:0005819">
    <property type="term" value="C:spindle"/>
    <property type="evidence" value="ECO:0000266"/>
    <property type="project" value="RGD"/>
</dbReference>
<dbReference type="GO" id="GO:0034098">
    <property type="term" value="C:VCP-NPL4-UFD1 AAA ATPase complex"/>
    <property type="evidence" value="ECO:0000318"/>
    <property type="project" value="GO_Central"/>
</dbReference>
<dbReference type="GO" id="GO:0005524">
    <property type="term" value="F:ATP binding"/>
    <property type="evidence" value="ECO:0007669"/>
    <property type="project" value="UniProtKB-KW"/>
</dbReference>
<dbReference type="GO" id="GO:0016887">
    <property type="term" value="F:ATP hydrolysis activity"/>
    <property type="evidence" value="ECO:0000318"/>
    <property type="project" value="GO_Central"/>
</dbReference>
<dbReference type="GO" id="GO:0042802">
    <property type="term" value="F:identical protein binding"/>
    <property type="evidence" value="ECO:0000266"/>
    <property type="project" value="RGD"/>
</dbReference>
<dbReference type="GO" id="GO:0031593">
    <property type="term" value="F:polyubiquitin modification-dependent protein binding"/>
    <property type="evidence" value="ECO:0000318"/>
    <property type="project" value="GO_Central"/>
</dbReference>
<dbReference type="GO" id="GO:1990275">
    <property type="term" value="F:preribosome binding"/>
    <property type="evidence" value="ECO:0000250"/>
    <property type="project" value="UniProtKB"/>
</dbReference>
<dbReference type="GO" id="GO:0097352">
    <property type="term" value="P:autophagosome maturation"/>
    <property type="evidence" value="ECO:0000318"/>
    <property type="project" value="GO_Central"/>
</dbReference>
<dbReference type="GO" id="GO:0051228">
    <property type="term" value="P:mitotic spindle disassembly"/>
    <property type="evidence" value="ECO:0000318"/>
    <property type="project" value="GO_Central"/>
</dbReference>
<dbReference type="GO" id="GO:0043161">
    <property type="term" value="P:proteasome-mediated ubiquitin-dependent protein catabolic process"/>
    <property type="evidence" value="ECO:0000318"/>
    <property type="project" value="GO_Central"/>
</dbReference>
<dbReference type="GO" id="GO:0030970">
    <property type="term" value="P:retrograde protein transport, ER to cytosol"/>
    <property type="evidence" value="ECO:0000318"/>
    <property type="project" value="GO_Central"/>
</dbReference>
<dbReference type="GO" id="GO:0042273">
    <property type="term" value="P:ribosomal large subunit biogenesis"/>
    <property type="evidence" value="ECO:0000250"/>
    <property type="project" value="UniProtKB"/>
</dbReference>
<dbReference type="CDD" id="cd19503">
    <property type="entry name" value="RecA-like_CDC48_NLV2_r1-like"/>
    <property type="match status" value="1"/>
</dbReference>
<dbReference type="FunFam" id="1.10.8.60:FF:000075">
    <property type="entry name" value="Spermatogenesis-associated protein 5-like protein 1"/>
    <property type="match status" value="1"/>
</dbReference>
<dbReference type="FunFam" id="3.40.50.300:FF:001081">
    <property type="entry name" value="Spermatogenesis-associated protein 5-like protein 1"/>
    <property type="match status" value="1"/>
</dbReference>
<dbReference type="FunFam" id="1.10.8.60:FF:000038">
    <property type="entry name" value="spermatogenesis-associated protein 5-like protein 1"/>
    <property type="match status" value="1"/>
</dbReference>
<dbReference type="FunFam" id="3.40.50.300:FF:001161">
    <property type="entry name" value="spermatogenesis-associated protein 5-like protein 1"/>
    <property type="match status" value="1"/>
</dbReference>
<dbReference type="Gene3D" id="1.10.8.60">
    <property type="match status" value="2"/>
</dbReference>
<dbReference type="Gene3D" id="3.40.50.300">
    <property type="entry name" value="P-loop containing nucleotide triphosphate hydrolases"/>
    <property type="match status" value="2"/>
</dbReference>
<dbReference type="InterPro" id="IPR003593">
    <property type="entry name" value="AAA+_ATPase"/>
</dbReference>
<dbReference type="InterPro" id="IPR050168">
    <property type="entry name" value="AAA_ATPase_domain"/>
</dbReference>
<dbReference type="InterPro" id="IPR041569">
    <property type="entry name" value="AAA_lid_3"/>
</dbReference>
<dbReference type="InterPro" id="IPR003959">
    <property type="entry name" value="ATPase_AAA_core"/>
</dbReference>
<dbReference type="InterPro" id="IPR003960">
    <property type="entry name" value="ATPase_AAA_CS"/>
</dbReference>
<dbReference type="InterPro" id="IPR027417">
    <property type="entry name" value="P-loop_NTPase"/>
</dbReference>
<dbReference type="PANTHER" id="PTHR23077">
    <property type="entry name" value="AAA-FAMILY ATPASE"/>
    <property type="match status" value="1"/>
</dbReference>
<dbReference type="PANTHER" id="PTHR23077:SF194">
    <property type="entry name" value="ATPASE FAMILY GENE 2 PROTEIN HOMOLOG B"/>
    <property type="match status" value="1"/>
</dbReference>
<dbReference type="Pfam" id="PF00004">
    <property type="entry name" value="AAA"/>
    <property type="match status" value="2"/>
</dbReference>
<dbReference type="Pfam" id="PF17862">
    <property type="entry name" value="AAA_lid_3"/>
    <property type="match status" value="2"/>
</dbReference>
<dbReference type="SMART" id="SM00382">
    <property type="entry name" value="AAA"/>
    <property type="match status" value="2"/>
</dbReference>
<dbReference type="SUPFAM" id="SSF52540">
    <property type="entry name" value="P-loop containing nucleoside triphosphate hydrolases"/>
    <property type="match status" value="2"/>
</dbReference>
<dbReference type="PROSITE" id="PS00674">
    <property type="entry name" value="AAA"/>
    <property type="match status" value="2"/>
</dbReference>
<comment type="function">
    <text evidence="2">ATP-dependent chaperone part of the 55LCC heterohexameric ATPase complex which is chromatin-associated and promotes replisome proteostasis to maintain replication fork progression and genome stability. Required for replication fork progression, sister chromatid cohesion, and chromosome stability. The ATPase activity is specifically enhanced by replication fork DNA and is coupled to cysteine protease-dependent cleavage of replisome substrates in response to replication fork damage. Uses ATPase activity to process replisome substrates in S-phase, facilitating their proteolytic turnover from chromatin to ensure DNA replication and mitotic fidelity. Plays an essential role in the cytoplasmic maturation steps of pre-60S ribosomal particles by promoting the release of shuttling protein RSL24D1/RLP24 from the pre-ribosomal particles.</text>
</comment>
<comment type="catalytic activity">
    <reaction evidence="1">
        <text>ATP + H2O = ADP + phosphate + H(+)</text>
        <dbReference type="Rhea" id="RHEA:13065"/>
        <dbReference type="ChEBI" id="CHEBI:15377"/>
        <dbReference type="ChEBI" id="CHEBI:15378"/>
        <dbReference type="ChEBI" id="CHEBI:30616"/>
        <dbReference type="ChEBI" id="CHEBI:43474"/>
        <dbReference type="ChEBI" id="CHEBI:456216"/>
        <dbReference type="EC" id="3.6.4.10"/>
    </reaction>
</comment>
<comment type="activity regulation">
    <text evidence="2">In the context of 55LCC heterohexameric ATPase complex, the ATPase activity is stimulated by DNA binding and inhibited in presence of RNA.</text>
</comment>
<comment type="subunit">
    <text evidence="2">Part of the 55LCC heterohexameric ATPase complex composed at least of AIRIM, AFG2A, AFG2B and CINP. Associates with pre-60S ribosomal particles.</text>
</comment>
<comment type="subcellular location">
    <subcellularLocation>
        <location evidence="2">Cytoplasm</location>
    </subcellularLocation>
    <subcellularLocation>
        <location evidence="2">Cytoplasm</location>
        <location evidence="2">Cytoskeleton</location>
        <location evidence="2">Spindle</location>
    </subcellularLocation>
    <subcellularLocation>
        <location evidence="4">Nucleus</location>
    </subcellularLocation>
</comment>
<comment type="tissue specificity">
    <text evidence="4">Expressed in neurons; also expressed at lower level in astrocytes, oligodendrocytes and microglia.</text>
</comment>
<comment type="similarity">
    <text evidence="6">Belongs to the AAA ATPase family. AFG2 subfamily.</text>
</comment>
<evidence type="ECO:0000250" key="1">
    <source>
        <dbReference type="UniProtKB" id="P32794"/>
    </source>
</evidence>
<evidence type="ECO:0000250" key="2">
    <source>
        <dbReference type="UniProtKB" id="Q9BVQ7"/>
    </source>
</evidence>
<evidence type="ECO:0000255" key="3"/>
<evidence type="ECO:0000269" key="4">
    <source>
    </source>
</evidence>
<evidence type="ECO:0000303" key="5">
    <source>
    </source>
</evidence>
<evidence type="ECO:0000305" key="6"/>
<evidence type="ECO:0000312" key="7">
    <source>
        <dbReference type="RGD" id="1595990"/>
    </source>
</evidence>
<name>AFG2B_RAT</name>
<reference key="1">
    <citation type="journal article" date="2004" name="Nature">
        <title>Genome sequence of the Brown Norway rat yields insights into mammalian evolution.</title>
        <authorList>
            <person name="Gibbs R.A."/>
            <person name="Weinstock G.M."/>
            <person name="Metzker M.L."/>
            <person name="Muzny D.M."/>
            <person name="Sodergren E.J."/>
            <person name="Scherer S."/>
            <person name="Scott G."/>
            <person name="Steffen D."/>
            <person name="Worley K.C."/>
            <person name="Burch P.E."/>
            <person name="Okwuonu G."/>
            <person name="Hines S."/>
            <person name="Lewis L."/>
            <person name="Deramo C."/>
            <person name="Delgado O."/>
            <person name="Dugan-Rocha S."/>
            <person name="Miner G."/>
            <person name="Morgan M."/>
            <person name="Hawes A."/>
            <person name="Gill R."/>
            <person name="Holt R.A."/>
            <person name="Adams M.D."/>
            <person name="Amanatides P.G."/>
            <person name="Baden-Tillson H."/>
            <person name="Barnstead M."/>
            <person name="Chin S."/>
            <person name="Evans C.A."/>
            <person name="Ferriera S."/>
            <person name="Fosler C."/>
            <person name="Glodek A."/>
            <person name="Gu Z."/>
            <person name="Jennings D."/>
            <person name="Kraft C.L."/>
            <person name="Nguyen T."/>
            <person name="Pfannkoch C.M."/>
            <person name="Sitter C."/>
            <person name="Sutton G.G."/>
            <person name="Venter J.C."/>
            <person name="Woodage T."/>
            <person name="Smith D."/>
            <person name="Lee H.-M."/>
            <person name="Gustafson E."/>
            <person name="Cahill P."/>
            <person name="Kana A."/>
            <person name="Doucette-Stamm L."/>
            <person name="Weinstock K."/>
            <person name="Fechtel K."/>
            <person name="Weiss R.B."/>
            <person name="Dunn D.M."/>
            <person name="Green E.D."/>
            <person name="Blakesley R.W."/>
            <person name="Bouffard G.G."/>
            <person name="De Jong P.J."/>
            <person name="Osoegawa K."/>
            <person name="Zhu B."/>
            <person name="Marra M."/>
            <person name="Schein J."/>
            <person name="Bosdet I."/>
            <person name="Fjell C."/>
            <person name="Jones S."/>
            <person name="Krzywinski M."/>
            <person name="Mathewson C."/>
            <person name="Siddiqui A."/>
            <person name="Wye N."/>
            <person name="McPherson J."/>
            <person name="Zhao S."/>
            <person name="Fraser C.M."/>
            <person name="Shetty J."/>
            <person name="Shatsman S."/>
            <person name="Geer K."/>
            <person name="Chen Y."/>
            <person name="Abramzon S."/>
            <person name="Nierman W.C."/>
            <person name="Havlak P.H."/>
            <person name="Chen R."/>
            <person name="Durbin K.J."/>
            <person name="Egan A."/>
            <person name="Ren Y."/>
            <person name="Song X.-Z."/>
            <person name="Li B."/>
            <person name="Liu Y."/>
            <person name="Qin X."/>
            <person name="Cawley S."/>
            <person name="Cooney A.J."/>
            <person name="D'Souza L.M."/>
            <person name="Martin K."/>
            <person name="Wu J.Q."/>
            <person name="Gonzalez-Garay M.L."/>
            <person name="Jackson A.R."/>
            <person name="Kalafus K.J."/>
            <person name="McLeod M.P."/>
            <person name="Milosavljevic A."/>
            <person name="Virk D."/>
            <person name="Volkov A."/>
            <person name="Wheeler D.A."/>
            <person name="Zhang Z."/>
            <person name="Bailey J.A."/>
            <person name="Eichler E.E."/>
            <person name="Tuzun E."/>
            <person name="Birney E."/>
            <person name="Mongin E."/>
            <person name="Ureta-Vidal A."/>
            <person name="Woodwark C."/>
            <person name="Zdobnov E."/>
            <person name="Bork P."/>
            <person name="Suyama M."/>
            <person name="Torrents D."/>
            <person name="Alexandersson M."/>
            <person name="Trask B.J."/>
            <person name="Young J.M."/>
            <person name="Huang H."/>
            <person name="Wang H."/>
            <person name="Xing H."/>
            <person name="Daniels S."/>
            <person name="Gietzen D."/>
            <person name="Schmidt J."/>
            <person name="Stevens K."/>
            <person name="Vitt U."/>
            <person name="Wingrove J."/>
            <person name="Camara F."/>
            <person name="Mar Alba M."/>
            <person name="Abril J.F."/>
            <person name="Guigo R."/>
            <person name="Smit A."/>
            <person name="Dubchak I."/>
            <person name="Rubin E.M."/>
            <person name="Couronne O."/>
            <person name="Poliakov A."/>
            <person name="Huebner N."/>
            <person name="Ganten D."/>
            <person name="Goesele C."/>
            <person name="Hummel O."/>
            <person name="Kreitler T."/>
            <person name="Lee Y.-A."/>
            <person name="Monti J."/>
            <person name="Schulz H."/>
            <person name="Zimdahl H."/>
            <person name="Himmelbauer H."/>
            <person name="Lehrach H."/>
            <person name="Jacob H.J."/>
            <person name="Bromberg S."/>
            <person name="Gullings-Handley J."/>
            <person name="Jensen-Seaman M.I."/>
            <person name="Kwitek A.E."/>
            <person name="Lazar J."/>
            <person name="Pasko D."/>
            <person name="Tonellato P.J."/>
            <person name="Twigger S."/>
            <person name="Ponting C.P."/>
            <person name="Duarte J.M."/>
            <person name="Rice S."/>
            <person name="Goodstadt L."/>
            <person name="Beatson S.A."/>
            <person name="Emes R.D."/>
            <person name="Winter E.E."/>
            <person name="Webber C."/>
            <person name="Brandt P."/>
            <person name="Nyakatura G."/>
            <person name="Adetobi M."/>
            <person name="Chiaromonte F."/>
            <person name="Elnitski L."/>
            <person name="Eswara P."/>
            <person name="Hardison R.C."/>
            <person name="Hou M."/>
            <person name="Kolbe D."/>
            <person name="Makova K."/>
            <person name="Miller W."/>
            <person name="Nekrutenko A."/>
            <person name="Riemer C."/>
            <person name="Schwartz S."/>
            <person name="Taylor J."/>
            <person name="Yang S."/>
            <person name="Zhang Y."/>
            <person name="Lindpaintner K."/>
            <person name="Andrews T.D."/>
            <person name="Caccamo M."/>
            <person name="Clamp M."/>
            <person name="Clarke L."/>
            <person name="Curwen V."/>
            <person name="Durbin R.M."/>
            <person name="Eyras E."/>
            <person name="Searle S.M."/>
            <person name="Cooper G.M."/>
            <person name="Batzoglou S."/>
            <person name="Brudno M."/>
            <person name="Sidow A."/>
            <person name="Stone E.A."/>
            <person name="Payseur B.A."/>
            <person name="Bourque G."/>
            <person name="Lopez-Otin C."/>
            <person name="Puente X.S."/>
            <person name="Chakrabarti K."/>
            <person name="Chatterji S."/>
            <person name="Dewey C."/>
            <person name="Pachter L."/>
            <person name="Bray N."/>
            <person name="Yap V.B."/>
            <person name="Caspi A."/>
            <person name="Tesler G."/>
            <person name="Pevzner P.A."/>
            <person name="Haussler D."/>
            <person name="Roskin K.M."/>
            <person name="Baertsch R."/>
            <person name="Clawson H."/>
            <person name="Furey T.S."/>
            <person name="Hinrichs A.S."/>
            <person name="Karolchik D."/>
            <person name="Kent W.J."/>
            <person name="Rosenbloom K.R."/>
            <person name="Trumbower H."/>
            <person name="Weirauch M."/>
            <person name="Cooper D.N."/>
            <person name="Stenson P.D."/>
            <person name="Ma B."/>
            <person name="Brent M."/>
            <person name="Arumugam M."/>
            <person name="Shteynberg D."/>
            <person name="Copley R.R."/>
            <person name="Taylor M.S."/>
            <person name="Riethman H."/>
            <person name="Mudunuri U."/>
            <person name="Peterson J."/>
            <person name="Guyer M."/>
            <person name="Felsenfeld A."/>
            <person name="Old S."/>
            <person name="Mockrin S."/>
            <person name="Collins F.S."/>
        </authorList>
    </citation>
    <scope>NUCLEOTIDE SEQUENCE [LARGE SCALE GENOMIC DNA]</scope>
    <source>
        <strain>Brown Norway</strain>
    </source>
</reference>
<reference key="2">
    <citation type="submission" date="2005-07" db="EMBL/GenBank/DDBJ databases">
        <authorList>
            <person name="Mural R.J."/>
            <person name="Adams M.D."/>
            <person name="Myers E.W."/>
            <person name="Smith H.O."/>
            <person name="Venter J.C."/>
        </authorList>
    </citation>
    <scope>NUCLEOTIDE SEQUENCE [LARGE SCALE GENOMIC DNA]</scope>
</reference>
<reference key="3">
    <citation type="journal article" date="2021" name="Am. J. Hum. Genet.">
        <title>Bi-allelic variants in SPATA5L1 lead to intellectual disability, spastic-dystonic cerebral palsy, epilepsy, and hearing loss.</title>
        <authorList>
            <person name="Richard E.M."/>
            <person name="Bakhtiari S."/>
            <person name="Marsh A.P.L."/>
            <person name="Kaiyrzhanov R."/>
            <person name="Wagner M."/>
            <person name="Shetty S."/>
            <person name="Pagnozzi A."/>
            <person name="Nordlie S.M."/>
            <person name="Guida B.S."/>
            <person name="Cornejo P."/>
            <person name="Magee H."/>
            <person name="Liu J."/>
            <person name="Norton B.Y."/>
            <person name="Webster R.I."/>
            <person name="Worgan L."/>
            <person name="Hakonarson H."/>
            <person name="Li J."/>
            <person name="Guo Y."/>
            <person name="Jain M."/>
            <person name="Blesson A."/>
            <person name="Rodan L.H."/>
            <person name="Abbott M.A."/>
            <person name="Comi A."/>
            <person name="Cohen J.S."/>
            <person name="Alhaddad B."/>
            <person name="Meitinger T."/>
            <person name="Lenz D."/>
            <person name="Ziegler A."/>
            <person name="Kotzaeridou U."/>
            <person name="Brunet T."/>
            <person name="Chassevent A."/>
            <person name="Smith-Hicks C."/>
            <person name="Ekstein J."/>
            <person name="Weiden T."/>
            <person name="Hahn A."/>
            <person name="Zharkinbekova N."/>
            <person name="Turnpenny P."/>
            <person name="Tucci A."/>
            <person name="Yelton M."/>
            <person name="Horvath R."/>
            <person name="Gungor S."/>
            <person name="Hiz S."/>
            <person name="Oktay Y."/>
            <person name="Lochmuller H."/>
            <person name="Zollino M."/>
            <person name="Morleo M."/>
            <person name="Marangi G."/>
            <person name="Nigro V."/>
            <person name="Torella A."/>
            <person name="Pinelli M."/>
            <person name="Amenta S."/>
            <person name="Husain R.A."/>
            <person name="Grossmann B."/>
            <person name="Rapp M."/>
            <person name="Steen C."/>
            <person name="Marquardt I."/>
            <person name="Grimmel M."/>
            <person name="Grasshoff U."/>
            <person name="Korenke G.C."/>
            <person name="Owczarek-Lipska M."/>
            <person name="Neidhardt J."/>
            <person name="Radio F.C."/>
            <person name="Mancini C."/>
            <person name="Claps Sepulveda D.J."/>
            <person name="McWalter K."/>
            <person name="Begtrup A."/>
            <person name="Crunk A."/>
            <person name="Guillen Sacoto M.J."/>
            <person name="Person R."/>
            <person name="Schnur R.E."/>
            <person name="Mancardi M.M."/>
            <person name="Kreuder F."/>
            <person name="Striano P."/>
            <person name="Zara F."/>
            <person name="Chung W.K."/>
            <person name="Marks W.A."/>
            <person name="van Eyk C.L."/>
            <person name="Webber D.L."/>
            <person name="Corbett M.A."/>
            <person name="Harper K."/>
            <person name="Berry J.G."/>
            <person name="MacLennan A.H."/>
            <person name="Gecz J."/>
            <person name="Tartaglia M."/>
            <person name="Salpietro V."/>
            <person name="Christodoulou J."/>
            <person name="Kaslin J."/>
            <person name="Padilla-Lopez S."/>
            <person name="Bilguvar K."/>
            <person name="Munchau A."/>
            <person name="Ahmed Z.M."/>
            <person name="Hufnagel R.B."/>
            <person name="Fahey M.C."/>
            <person name="Maroofian R."/>
            <person name="Houlden H."/>
            <person name="Sticht H."/>
            <person name="Mane S.M."/>
            <person name="Rad A."/>
            <person name="Vona B."/>
            <person name="Jin S.C."/>
            <person name="Haack T.B."/>
            <person name="Makowski C."/>
            <person name="Hirsch Y."/>
            <person name="Riazuddin S."/>
            <person name="Kruer M.C."/>
        </authorList>
    </citation>
    <scope>SUBCELLULAR LOCATION</scope>
    <scope>TISSUE SPECIFICITY</scope>
</reference>
<feature type="chain" id="PRO_0000456284" description="ATPase family gene 2 protein homolog B">
    <location>
        <begin position="1"/>
        <end position="747"/>
    </location>
</feature>
<feature type="binding site" evidence="3">
    <location>
        <begin position="234"/>
        <end position="241"/>
    </location>
    <ligand>
        <name>ATP</name>
        <dbReference type="ChEBI" id="CHEBI:30616"/>
        <label>1</label>
    </ligand>
</feature>
<feature type="binding site" evidence="3">
    <location>
        <begin position="500"/>
        <end position="507"/>
    </location>
    <ligand>
        <name>ATP</name>
        <dbReference type="ChEBI" id="CHEBI:30616"/>
        <label>2</label>
    </ligand>
</feature>
<feature type="modified residue" description="N-acetylmethionine" evidence="2">
    <location>
        <position position="1"/>
    </location>
</feature>
<accession>D4A2B7</accession>
<proteinExistence type="evidence at transcript level"/>
<gene>
    <name type="primary">Afg2b</name>
    <name evidence="5 7" type="synonym">Spata5l1</name>
</gene>
<organism>
    <name type="scientific">Rattus norvegicus</name>
    <name type="common">Rat</name>
    <dbReference type="NCBI Taxonomy" id="10116"/>
    <lineage>
        <taxon>Eukaryota</taxon>
        <taxon>Metazoa</taxon>
        <taxon>Chordata</taxon>
        <taxon>Craniata</taxon>
        <taxon>Vertebrata</taxon>
        <taxon>Euteleostomi</taxon>
        <taxon>Mammalia</taxon>
        <taxon>Eutheria</taxon>
        <taxon>Euarchontoglires</taxon>
        <taxon>Glires</taxon>
        <taxon>Rodentia</taxon>
        <taxon>Myomorpha</taxon>
        <taxon>Muroidea</taxon>
        <taxon>Muridae</taxon>
        <taxon>Murinae</taxon>
        <taxon>Rattus</taxon>
    </lineage>
</organism>